<keyword id="KW-1185">Reference proteome</keyword>
<comment type="induction">
    <text evidence="1">Expressed in equally in both exponential and stationary phase in rich medium (at protein level).</text>
</comment>
<comment type="miscellaneous">
    <text evidence="1">Encoded antisense to yicL; it is entirely within the yicL coding region.</text>
</comment>
<name>YICU_ECOLI</name>
<organism>
    <name type="scientific">Escherichia coli (strain K12)</name>
    <dbReference type="NCBI Taxonomy" id="83333"/>
    <lineage>
        <taxon>Bacteria</taxon>
        <taxon>Pseudomonadati</taxon>
        <taxon>Pseudomonadota</taxon>
        <taxon>Gammaproteobacteria</taxon>
        <taxon>Enterobacterales</taxon>
        <taxon>Enterobacteriaceae</taxon>
        <taxon>Escherichia</taxon>
    </lineage>
</organism>
<accession>P0DSH5</accession>
<accession>A0A7H2C7A4</accession>
<protein>
    <recommendedName>
        <fullName evidence="2">Protein YicU</fullName>
    </recommendedName>
</protein>
<evidence type="ECO:0000269" key="1">
    <source>
    </source>
</evidence>
<evidence type="ECO:0000303" key="2">
    <source>
    </source>
</evidence>
<evidence type="ECO:0000312" key="3">
    <source>
        <dbReference type="EMBL" id="QNV50551.1"/>
    </source>
</evidence>
<reference key="1">
    <citation type="journal article" date="1997" name="Science">
        <title>The complete genome sequence of Escherichia coli K-12.</title>
        <authorList>
            <person name="Blattner F.R."/>
            <person name="Plunkett G. III"/>
            <person name="Bloch C.A."/>
            <person name="Perna N.T."/>
            <person name="Burland V."/>
            <person name="Riley M."/>
            <person name="Collado-Vides J."/>
            <person name="Glasner J.D."/>
            <person name="Rode C.K."/>
            <person name="Mayhew G.F."/>
            <person name="Gregor J."/>
            <person name="Davis N.W."/>
            <person name="Kirkpatrick H.A."/>
            <person name="Goeden M.A."/>
            <person name="Rose D.J."/>
            <person name="Mau B."/>
            <person name="Shao Y."/>
        </authorList>
    </citation>
    <scope>NUCLEOTIDE SEQUENCE [LARGE SCALE GENOMIC DNA]</scope>
    <source>
        <strain>K12 / MG1655 / ATCC 47076</strain>
    </source>
</reference>
<reference key="2">
    <citation type="journal article" date="2019" name="MBio">
        <title>Identifying small proteins by ribosome profiling with stalled initiation complexes.</title>
        <authorList>
            <person name="Weaver J."/>
            <person name="Mohammad F."/>
            <person name="Buskirk A.R."/>
            <person name="Storz G."/>
        </authorList>
    </citation>
    <scope>IDENTIFICATION</scope>
    <scope>INDUCTION</scope>
    <source>
        <strain>K12 / MG1655 / ATCC 47076</strain>
    </source>
</reference>
<dbReference type="EMBL" id="U00096">
    <property type="protein sequence ID" value="QNV50551.1"/>
    <property type="molecule type" value="Genomic_DNA"/>
</dbReference>
<dbReference type="InParanoid" id="P0DSH5"/>
<dbReference type="BioCyc" id="EcoCyc:MONOMER0-4511"/>
<dbReference type="Proteomes" id="UP000000625">
    <property type="component" value="Chromosome"/>
</dbReference>
<feature type="chain" id="PRO_0000447153" description="Protein YicU">
    <location>
        <begin position="1"/>
        <end position="19"/>
    </location>
</feature>
<proteinExistence type="evidence at protein level"/>
<sequence>MTSDYRVSPIKKSRPAMSK</sequence>
<gene>
    <name evidence="2" type="primary">yicU</name>
    <name evidence="3" type="ordered locus">b4797</name>
</gene>